<proteinExistence type="inferred from homology"/>
<dbReference type="EMBL" id="CP001600">
    <property type="protein sequence ID" value="ACR69618.1"/>
    <property type="molecule type" value="Genomic_DNA"/>
</dbReference>
<dbReference type="RefSeq" id="WP_015871734.1">
    <property type="nucleotide sequence ID" value="NZ_CP169062.1"/>
</dbReference>
<dbReference type="SMR" id="C5BAD8"/>
<dbReference type="STRING" id="67780.B6E78_04380"/>
<dbReference type="KEGG" id="eic:NT01EI_2448"/>
<dbReference type="HOGENOM" id="CLU_155659_3_1_6"/>
<dbReference type="OrthoDB" id="9812205at2"/>
<dbReference type="Proteomes" id="UP000001485">
    <property type="component" value="Chromosome"/>
</dbReference>
<dbReference type="GO" id="GO:0005829">
    <property type="term" value="C:cytosol"/>
    <property type="evidence" value="ECO:0007669"/>
    <property type="project" value="TreeGrafter"/>
</dbReference>
<dbReference type="FunFam" id="2.20.25.10:FF:000002">
    <property type="entry name" value="UPF0434 protein YcaR"/>
    <property type="match status" value="1"/>
</dbReference>
<dbReference type="Gene3D" id="2.20.25.10">
    <property type="match status" value="1"/>
</dbReference>
<dbReference type="HAMAP" id="MF_01187">
    <property type="entry name" value="UPF0434"/>
    <property type="match status" value="1"/>
</dbReference>
<dbReference type="InterPro" id="IPR005651">
    <property type="entry name" value="Trm112-like"/>
</dbReference>
<dbReference type="PANTHER" id="PTHR33505:SF4">
    <property type="entry name" value="PROTEIN PREY, MITOCHONDRIAL"/>
    <property type="match status" value="1"/>
</dbReference>
<dbReference type="PANTHER" id="PTHR33505">
    <property type="entry name" value="ZGC:162634"/>
    <property type="match status" value="1"/>
</dbReference>
<dbReference type="Pfam" id="PF03966">
    <property type="entry name" value="Trm112p"/>
    <property type="match status" value="1"/>
</dbReference>
<dbReference type="SUPFAM" id="SSF158997">
    <property type="entry name" value="Trm112p-like"/>
    <property type="match status" value="1"/>
</dbReference>
<organism>
    <name type="scientific">Edwardsiella ictaluri (strain 93-146)</name>
    <dbReference type="NCBI Taxonomy" id="634503"/>
    <lineage>
        <taxon>Bacteria</taxon>
        <taxon>Pseudomonadati</taxon>
        <taxon>Pseudomonadota</taxon>
        <taxon>Gammaproteobacteria</taxon>
        <taxon>Enterobacterales</taxon>
        <taxon>Hafniaceae</taxon>
        <taxon>Edwardsiella</taxon>
    </lineage>
</organism>
<reference key="1">
    <citation type="submission" date="2009-03" db="EMBL/GenBank/DDBJ databases">
        <title>Complete genome sequence of Edwardsiella ictaluri 93-146.</title>
        <authorList>
            <person name="Williams M.L."/>
            <person name="Gillaspy A.F."/>
            <person name="Dyer D.W."/>
            <person name="Thune R.L."/>
            <person name="Waldbieser G.C."/>
            <person name="Schuster S.C."/>
            <person name="Gipson J."/>
            <person name="Zaitshik J."/>
            <person name="Landry C."/>
            <person name="Lawrence M.L."/>
        </authorList>
    </citation>
    <scope>NUCLEOTIDE SEQUENCE [LARGE SCALE GENOMIC DNA]</scope>
    <source>
        <strain>93-146</strain>
    </source>
</reference>
<comment type="similarity">
    <text evidence="1">Belongs to the UPF0434 family.</text>
</comment>
<protein>
    <recommendedName>
        <fullName evidence="1">UPF0434 protein NT01EI_2448</fullName>
    </recommendedName>
</protein>
<name>Y2448_EDWI9</name>
<evidence type="ECO:0000255" key="1">
    <source>
        <dbReference type="HAMAP-Rule" id="MF_01187"/>
    </source>
</evidence>
<feature type="chain" id="PRO_1000213782" description="UPF0434 protein NT01EI_2448">
    <location>
        <begin position="1"/>
        <end position="58"/>
    </location>
</feature>
<sequence>MDHRLLEIIACPVCNGKLSFNQEHQELVCKIDRLAFPLRDGIPVMLESEARPLPQEEN</sequence>
<gene>
    <name type="ordered locus">NT01EI_2448</name>
</gene>
<accession>C5BAD8</accession>